<gene>
    <name evidence="1" type="primary">rlmE</name>
    <name evidence="1" type="synonym">ftsJ</name>
    <name evidence="1" type="synonym">rrmJ</name>
    <name type="ordered locus">TP_0682</name>
</gene>
<accession>O83687</accession>
<reference key="1">
    <citation type="journal article" date="1998" name="Science">
        <title>Complete genome sequence of Treponema pallidum, the syphilis spirochete.</title>
        <authorList>
            <person name="Fraser C.M."/>
            <person name="Norris S.J."/>
            <person name="Weinstock G.M."/>
            <person name="White O."/>
            <person name="Sutton G.G."/>
            <person name="Dodson R.J."/>
            <person name="Gwinn M.L."/>
            <person name="Hickey E.K."/>
            <person name="Clayton R.A."/>
            <person name="Ketchum K.A."/>
            <person name="Sodergren E."/>
            <person name="Hardham J.M."/>
            <person name="McLeod M.P."/>
            <person name="Salzberg S.L."/>
            <person name="Peterson J.D."/>
            <person name="Khalak H.G."/>
            <person name="Richardson D.L."/>
            <person name="Howell J.K."/>
            <person name="Chidambaram M."/>
            <person name="Utterback T.R."/>
            <person name="McDonald L.A."/>
            <person name="Artiach P."/>
            <person name="Bowman C."/>
            <person name="Cotton M.D."/>
            <person name="Fujii C."/>
            <person name="Garland S.A."/>
            <person name="Hatch B."/>
            <person name="Horst K."/>
            <person name="Roberts K.M."/>
            <person name="Sandusky M."/>
            <person name="Weidman J.F."/>
            <person name="Smith H.O."/>
            <person name="Venter J.C."/>
        </authorList>
    </citation>
    <scope>NUCLEOTIDE SEQUENCE [LARGE SCALE GENOMIC DNA]</scope>
    <source>
        <strain>Nichols</strain>
    </source>
</reference>
<sequence length="200" mass="21318">MNVYKRADFWAKKAAAAGYRARSVYKLAALDKKYSLLSRASRVLDLGAAPGSWTQYVLGTAAACTAVCAVDVQPIASDIQDARLQRVQGDLCAADTRARVACNAPFDLILSDAAPRTTGNRTVDTSASACLAAGVCAYVNFLSSDGGLVFKVFQGSEHLAILTHLRAHFGAVCSFKPPASRPRSCELYVVARFFRGTCGK</sequence>
<comment type="function">
    <text evidence="1">Specifically methylates the uridine in position 2552 of 23S rRNA at the 2'-O position of the ribose in the fully assembled 50S ribosomal subunit.</text>
</comment>
<comment type="catalytic activity">
    <reaction evidence="1">
        <text>uridine(2552) in 23S rRNA + S-adenosyl-L-methionine = 2'-O-methyluridine(2552) in 23S rRNA + S-adenosyl-L-homocysteine + H(+)</text>
        <dbReference type="Rhea" id="RHEA:42720"/>
        <dbReference type="Rhea" id="RHEA-COMP:10202"/>
        <dbReference type="Rhea" id="RHEA-COMP:10203"/>
        <dbReference type="ChEBI" id="CHEBI:15378"/>
        <dbReference type="ChEBI" id="CHEBI:57856"/>
        <dbReference type="ChEBI" id="CHEBI:59789"/>
        <dbReference type="ChEBI" id="CHEBI:65315"/>
        <dbReference type="ChEBI" id="CHEBI:74478"/>
        <dbReference type="EC" id="2.1.1.166"/>
    </reaction>
</comment>
<comment type="subcellular location">
    <subcellularLocation>
        <location evidence="1">Cytoplasm</location>
    </subcellularLocation>
</comment>
<comment type="similarity">
    <text evidence="1">Belongs to the class I-like SAM-binding methyltransferase superfamily. RNA methyltransferase RlmE family.</text>
</comment>
<feature type="chain" id="PRO_0000155545" description="Ribosomal RNA large subunit methyltransferase E">
    <location>
        <begin position="1"/>
        <end position="200"/>
    </location>
</feature>
<feature type="active site" description="Proton acceptor" evidence="1">
    <location>
        <position position="151"/>
    </location>
</feature>
<feature type="binding site" evidence="1">
    <location>
        <position position="51"/>
    </location>
    <ligand>
        <name>S-adenosyl-L-methionine</name>
        <dbReference type="ChEBI" id="CHEBI:59789"/>
    </ligand>
</feature>
<feature type="binding site" evidence="1">
    <location>
        <position position="53"/>
    </location>
    <ligand>
        <name>S-adenosyl-L-methionine</name>
        <dbReference type="ChEBI" id="CHEBI:59789"/>
    </ligand>
</feature>
<feature type="binding site" evidence="1">
    <location>
        <position position="71"/>
    </location>
    <ligand>
        <name>S-adenosyl-L-methionine</name>
        <dbReference type="ChEBI" id="CHEBI:59789"/>
    </ligand>
</feature>
<feature type="binding site" evidence="1">
    <location>
        <position position="90"/>
    </location>
    <ligand>
        <name>S-adenosyl-L-methionine</name>
        <dbReference type="ChEBI" id="CHEBI:59789"/>
    </ligand>
</feature>
<feature type="binding site" evidence="1">
    <location>
        <position position="112"/>
    </location>
    <ligand>
        <name>S-adenosyl-L-methionine</name>
        <dbReference type="ChEBI" id="CHEBI:59789"/>
    </ligand>
</feature>
<keyword id="KW-0963">Cytoplasm</keyword>
<keyword id="KW-0489">Methyltransferase</keyword>
<keyword id="KW-1185">Reference proteome</keyword>
<keyword id="KW-0698">rRNA processing</keyword>
<keyword id="KW-0949">S-adenosyl-L-methionine</keyword>
<keyword id="KW-0808">Transferase</keyword>
<evidence type="ECO:0000255" key="1">
    <source>
        <dbReference type="HAMAP-Rule" id="MF_01547"/>
    </source>
</evidence>
<proteinExistence type="inferred from homology"/>
<name>RLME_TREPA</name>
<protein>
    <recommendedName>
        <fullName evidence="1">Ribosomal RNA large subunit methyltransferase E</fullName>
        <ecNumber evidence="1">2.1.1.166</ecNumber>
    </recommendedName>
    <alternativeName>
        <fullName evidence="1">23S rRNA Um2552 methyltransferase</fullName>
    </alternativeName>
    <alternativeName>
        <fullName evidence="1">rRNA (uridine-2'-O-)-methyltransferase</fullName>
    </alternativeName>
</protein>
<organism>
    <name type="scientific">Treponema pallidum (strain Nichols)</name>
    <dbReference type="NCBI Taxonomy" id="243276"/>
    <lineage>
        <taxon>Bacteria</taxon>
        <taxon>Pseudomonadati</taxon>
        <taxon>Spirochaetota</taxon>
        <taxon>Spirochaetia</taxon>
        <taxon>Spirochaetales</taxon>
        <taxon>Treponemataceae</taxon>
        <taxon>Treponema</taxon>
    </lineage>
</organism>
<dbReference type="EC" id="2.1.1.166" evidence="1"/>
<dbReference type="EMBL" id="AE000520">
    <property type="protein sequence ID" value="AAC65645.1"/>
    <property type="molecule type" value="Genomic_DNA"/>
</dbReference>
<dbReference type="PIR" id="B71295">
    <property type="entry name" value="B71295"/>
</dbReference>
<dbReference type="RefSeq" id="WP_010882127.1">
    <property type="nucleotide sequence ID" value="NC_021490.2"/>
</dbReference>
<dbReference type="SMR" id="O83687"/>
<dbReference type="STRING" id="243276.TP_0682"/>
<dbReference type="EnsemblBacteria" id="AAC65645">
    <property type="protein sequence ID" value="AAC65645"/>
    <property type="gene ID" value="TP_0682"/>
</dbReference>
<dbReference type="KEGG" id="tpa:TP_0682"/>
<dbReference type="KEGG" id="tpw:TPANIC_0682"/>
<dbReference type="eggNOG" id="COG0293">
    <property type="taxonomic scope" value="Bacteria"/>
</dbReference>
<dbReference type="HOGENOM" id="CLU_009422_4_4_12"/>
<dbReference type="OrthoDB" id="154490at2"/>
<dbReference type="Proteomes" id="UP000000811">
    <property type="component" value="Chromosome"/>
</dbReference>
<dbReference type="GO" id="GO:0005737">
    <property type="term" value="C:cytoplasm"/>
    <property type="evidence" value="ECO:0007669"/>
    <property type="project" value="UniProtKB-SubCell"/>
</dbReference>
<dbReference type="GO" id="GO:0008650">
    <property type="term" value="F:rRNA (uridine-2'-O-)-methyltransferase activity"/>
    <property type="evidence" value="ECO:0007669"/>
    <property type="project" value="UniProtKB-UniRule"/>
</dbReference>
<dbReference type="Gene3D" id="3.40.50.150">
    <property type="entry name" value="Vaccinia Virus protein VP39"/>
    <property type="match status" value="1"/>
</dbReference>
<dbReference type="HAMAP" id="MF_01547">
    <property type="entry name" value="RNA_methyltr_E"/>
    <property type="match status" value="1"/>
</dbReference>
<dbReference type="InterPro" id="IPR050082">
    <property type="entry name" value="RNA_methyltr_RlmE"/>
</dbReference>
<dbReference type="InterPro" id="IPR002877">
    <property type="entry name" value="RNA_MeTrfase_FtsJ_dom"/>
</dbReference>
<dbReference type="InterPro" id="IPR015507">
    <property type="entry name" value="rRNA-MeTfrase_E"/>
</dbReference>
<dbReference type="InterPro" id="IPR029063">
    <property type="entry name" value="SAM-dependent_MTases_sf"/>
</dbReference>
<dbReference type="PANTHER" id="PTHR10920:SF13">
    <property type="entry name" value="PRE-RRNA 2'-O-RIBOSE RNA METHYLTRANSFERASE FTSJ3"/>
    <property type="match status" value="1"/>
</dbReference>
<dbReference type="PANTHER" id="PTHR10920">
    <property type="entry name" value="RIBOSOMAL RNA METHYLTRANSFERASE"/>
    <property type="match status" value="1"/>
</dbReference>
<dbReference type="Pfam" id="PF01728">
    <property type="entry name" value="FtsJ"/>
    <property type="match status" value="1"/>
</dbReference>
<dbReference type="PIRSF" id="PIRSF005461">
    <property type="entry name" value="23S_rRNA_mtase"/>
    <property type="match status" value="1"/>
</dbReference>
<dbReference type="SUPFAM" id="SSF53335">
    <property type="entry name" value="S-adenosyl-L-methionine-dependent methyltransferases"/>
    <property type="match status" value="1"/>
</dbReference>